<dbReference type="EC" id="2.7.7.60" evidence="1"/>
<dbReference type="EMBL" id="CU928163">
    <property type="protein sequence ID" value="CAR14238.1"/>
    <property type="molecule type" value="Genomic_DNA"/>
</dbReference>
<dbReference type="RefSeq" id="WP_000246141.1">
    <property type="nucleotide sequence ID" value="NC_011751.1"/>
</dbReference>
<dbReference type="RefSeq" id="YP_002413760.1">
    <property type="nucleotide sequence ID" value="NC_011751.1"/>
</dbReference>
<dbReference type="SMR" id="B7N6X7"/>
<dbReference type="STRING" id="585056.ECUMN_3071"/>
<dbReference type="KEGG" id="eum:ECUMN_3071"/>
<dbReference type="PATRIC" id="fig|585056.7.peg.3247"/>
<dbReference type="HOGENOM" id="CLU_061281_3_1_6"/>
<dbReference type="UniPathway" id="UPA00056">
    <property type="reaction ID" value="UER00093"/>
</dbReference>
<dbReference type="Proteomes" id="UP000007097">
    <property type="component" value="Chromosome"/>
</dbReference>
<dbReference type="GO" id="GO:0050518">
    <property type="term" value="F:2-C-methyl-D-erythritol 4-phosphate cytidylyltransferase activity"/>
    <property type="evidence" value="ECO:0007669"/>
    <property type="project" value="UniProtKB-UniRule"/>
</dbReference>
<dbReference type="GO" id="GO:0019288">
    <property type="term" value="P:isopentenyl diphosphate biosynthetic process, methylerythritol 4-phosphate pathway"/>
    <property type="evidence" value="ECO:0007669"/>
    <property type="project" value="UniProtKB-UniRule"/>
</dbReference>
<dbReference type="CDD" id="cd02516">
    <property type="entry name" value="CDP-ME_synthetase"/>
    <property type="match status" value="1"/>
</dbReference>
<dbReference type="FunFam" id="3.90.550.10:FF:000003">
    <property type="entry name" value="2-C-methyl-D-erythritol 4-phosphate cytidylyltransferase"/>
    <property type="match status" value="1"/>
</dbReference>
<dbReference type="Gene3D" id="3.90.550.10">
    <property type="entry name" value="Spore Coat Polysaccharide Biosynthesis Protein SpsA, Chain A"/>
    <property type="match status" value="1"/>
</dbReference>
<dbReference type="HAMAP" id="MF_00108">
    <property type="entry name" value="IspD"/>
    <property type="match status" value="1"/>
</dbReference>
<dbReference type="InterPro" id="IPR001228">
    <property type="entry name" value="IspD"/>
</dbReference>
<dbReference type="InterPro" id="IPR034683">
    <property type="entry name" value="IspD/TarI"/>
</dbReference>
<dbReference type="InterPro" id="IPR050088">
    <property type="entry name" value="IspD/TarI_cytidylyltransf_bact"/>
</dbReference>
<dbReference type="InterPro" id="IPR018294">
    <property type="entry name" value="ISPD_synthase_CS"/>
</dbReference>
<dbReference type="InterPro" id="IPR029044">
    <property type="entry name" value="Nucleotide-diphossugar_trans"/>
</dbReference>
<dbReference type="NCBIfam" id="TIGR00453">
    <property type="entry name" value="ispD"/>
    <property type="match status" value="1"/>
</dbReference>
<dbReference type="PANTHER" id="PTHR32125">
    <property type="entry name" value="2-C-METHYL-D-ERYTHRITOL 4-PHOSPHATE CYTIDYLYLTRANSFERASE, CHLOROPLASTIC"/>
    <property type="match status" value="1"/>
</dbReference>
<dbReference type="PANTHER" id="PTHR32125:SF4">
    <property type="entry name" value="2-C-METHYL-D-ERYTHRITOL 4-PHOSPHATE CYTIDYLYLTRANSFERASE, CHLOROPLASTIC"/>
    <property type="match status" value="1"/>
</dbReference>
<dbReference type="Pfam" id="PF01128">
    <property type="entry name" value="IspD"/>
    <property type="match status" value="1"/>
</dbReference>
<dbReference type="SUPFAM" id="SSF53448">
    <property type="entry name" value="Nucleotide-diphospho-sugar transferases"/>
    <property type="match status" value="1"/>
</dbReference>
<dbReference type="PROSITE" id="PS01295">
    <property type="entry name" value="ISPD"/>
    <property type="match status" value="1"/>
</dbReference>
<sequence length="236" mass="25767">MATTHLDVCAVVPAAGFGRRMQTECPKQYLSIGNQTILEHSVHALLAHPRVKRVVIAISPGDSRFAQLPLANHPQITVVDGGDERADSVLAGLKAAGDAQWVLVHDAARPCLHQDDLARLLTLSETSRTGGILAAPVRDTMKRAEPGKNAIAHTVDRNGLWHALTPQFFPRELLHDCLTRALNEGATITDEASALEYCGFHPQLVEGRADNIKVTRPEDLALAEFYLTRTIHQENT</sequence>
<name>ISPD_ECOLU</name>
<keyword id="KW-0414">Isoprene biosynthesis</keyword>
<keyword id="KW-0548">Nucleotidyltransferase</keyword>
<keyword id="KW-0808">Transferase</keyword>
<feature type="chain" id="PRO_1000117442" description="2-C-methyl-D-erythritol 4-phosphate cytidylyltransferase">
    <location>
        <begin position="1"/>
        <end position="236"/>
    </location>
</feature>
<feature type="site" description="Transition state stabilizer" evidence="1">
    <location>
        <position position="20"/>
    </location>
</feature>
<feature type="site" description="Transition state stabilizer" evidence="1">
    <location>
        <position position="27"/>
    </location>
</feature>
<feature type="site" description="Positions MEP for the nucleophilic attack" evidence="1">
    <location>
        <position position="157"/>
    </location>
</feature>
<feature type="site" description="Positions MEP for the nucleophilic attack" evidence="1">
    <location>
        <position position="213"/>
    </location>
</feature>
<comment type="function">
    <text evidence="1">Catalyzes the formation of 4-diphosphocytidyl-2-C-methyl-D-erythritol from CTP and 2-C-methyl-D-erythritol 4-phosphate (MEP).</text>
</comment>
<comment type="catalytic activity">
    <reaction evidence="1">
        <text>2-C-methyl-D-erythritol 4-phosphate + CTP + H(+) = 4-CDP-2-C-methyl-D-erythritol + diphosphate</text>
        <dbReference type="Rhea" id="RHEA:13429"/>
        <dbReference type="ChEBI" id="CHEBI:15378"/>
        <dbReference type="ChEBI" id="CHEBI:33019"/>
        <dbReference type="ChEBI" id="CHEBI:37563"/>
        <dbReference type="ChEBI" id="CHEBI:57823"/>
        <dbReference type="ChEBI" id="CHEBI:58262"/>
        <dbReference type="EC" id="2.7.7.60"/>
    </reaction>
</comment>
<comment type="pathway">
    <text evidence="1">Isoprenoid biosynthesis; isopentenyl diphosphate biosynthesis via DXP pathway; isopentenyl diphosphate from 1-deoxy-D-xylulose 5-phosphate: step 2/6.</text>
</comment>
<comment type="subunit">
    <text evidence="1">Homodimer.</text>
</comment>
<comment type="similarity">
    <text evidence="1">Belongs to the IspD/TarI cytidylyltransferase family. IspD subfamily.</text>
</comment>
<accession>B7N6X7</accession>
<protein>
    <recommendedName>
        <fullName evidence="1">2-C-methyl-D-erythritol 4-phosphate cytidylyltransferase</fullName>
        <ecNumber evidence="1">2.7.7.60</ecNumber>
    </recommendedName>
    <alternativeName>
        <fullName evidence="1">4-diphosphocytidyl-2C-methyl-D-erythritol synthase</fullName>
    </alternativeName>
    <alternativeName>
        <fullName evidence="1">MEP cytidylyltransferase</fullName>
        <shortName evidence="1">MCT</shortName>
    </alternativeName>
</protein>
<organism>
    <name type="scientific">Escherichia coli O17:K52:H18 (strain UMN026 / ExPEC)</name>
    <dbReference type="NCBI Taxonomy" id="585056"/>
    <lineage>
        <taxon>Bacteria</taxon>
        <taxon>Pseudomonadati</taxon>
        <taxon>Pseudomonadota</taxon>
        <taxon>Gammaproteobacteria</taxon>
        <taxon>Enterobacterales</taxon>
        <taxon>Enterobacteriaceae</taxon>
        <taxon>Escherichia</taxon>
    </lineage>
</organism>
<evidence type="ECO:0000255" key="1">
    <source>
        <dbReference type="HAMAP-Rule" id="MF_00108"/>
    </source>
</evidence>
<reference key="1">
    <citation type="journal article" date="2009" name="PLoS Genet.">
        <title>Organised genome dynamics in the Escherichia coli species results in highly diverse adaptive paths.</title>
        <authorList>
            <person name="Touchon M."/>
            <person name="Hoede C."/>
            <person name="Tenaillon O."/>
            <person name="Barbe V."/>
            <person name="Baeriswyl S."/>
            <person name="Bidet P."/>
            <person name="Bingen E."/>
            <person name="Bonacorsi S."/>
            <person name="Bouchier C."/>
            <person name="Bouvet O."/>
            <person name="Calteau A."/>
            <person name="Chiapello H."/>
            <person name="Clermont O."/>
            <person name="Cruveiller S."/>
            <person name="Danchin A."/>
            <person name="Diard M."/>
            <person name="Dossat C."/>
            <person name="Karoui M.E."/>
            <person name="Frapy E."/>
            <person name="Garry L."/>
            <person name="Ghigo J.M."/>
            <person name="Gilles A.M."/>
            <person name="Johnson J."/>
            <person name="Le Bouguenec C."/>
            <person name="Lescat M."/>
            <person name="Mangenot S."/>
            <person name="Martinez-Jehanne V."/>
            <person name="Matic I."/>
            <person name="Nassif X."/>
            <person name="Oztas S."/>
            <person name="Petit M.A."/>
            <person name="Pichon C."/>
            <person name="Rouy Z."/>
            <person name="Ruf C.S."/>
            <person name="Schneider D."/>
            <person name="Tourret J."/>
            <person name="Vacherie B."/>
            <person name="Vallenet D."/>
            <person name="Medigue C."/>
            <person name="Rocha E.P.C."/>
            <person name="Denamur E."/>
        </authorList>
    </citation>
    <scope>NUCLEOTIDE SEQUENCE [LARGE SCALE GENOMIC DNA]</scope>
    <source>
        <strain>UMN026 / ExPEC</strain>
    </source>
</reference>
<proteinExistence type="inferred from homology"/>
<gene>
    <name evidence="1" type="primary">ispD</name>
    <name type="ordered locus">ECUMN_3071</name>
</gene>